<protein>
    <recommendedName>
        <fullName>Isoniazid-induced protein IniA</fullName>
    </recommendedName>
</protein>
<accession>P9WJ98</accession>
<accession>L0T6D8</accession>
<accession>O06293</accession>
<accession>Q7D9Z6</accession>
<comment type="function">
    <text evidence="1">Participates in the development of tolerance to both isoniazid and ethambutol. May function through a MDR-pump like mechanism, although it does not appear to directly transport isoniazid from the cell (By similarity).</text>
</comment>
<comment type="subunit">
    <text evidence="1">Forms multimeric structures containing a central pore.</text>
</comment>
<comment type="subcellular location">
    <subcellularLocation>
        <location evidence="3">Cell membrane</location>
        <topology evidence="3">Single-pass membrane protein</topology>
    </subcellularLocation>
</comment>
<sequence>MVPAGLCAYRDLRRKRARKWGDTVTQPDDPRRVGVIVELIDHTIAIAKLNERGDLVQRLTRARQRITDPQVRVVIAGLLKQGKSQLLNSLLNLPAARVGDDEATVVITVVSYSAQPSARLVLAAGPDGTTAAVDIPVDDISTDVRRAPHAGGREVLRVEVGAPSPLLRGGLAFIDTPGVGGLGQPHLSATLGLLPEADAVLVVSDTSQEFTEPEMWFVRQAHQICPVGAVVATKTDLYPRWREIVNANAAHLQRARVPMPIIAVSSLLRSHAVTLNDKELNEESNFPAIVKFLSEQVLSRATERVRAGVLGEIRSATEQLAVSLGSELSVVNDPNLRDRLASDLERRKREAQQAVQQTALWQQVLGDGFNDLTADVDHDLRTRFRTVTEDAERQIDSCDPTAHWAEIGNDVENAIATAVGDNFVWAYQRSEALADDVARSFADAGLDSVLSAELSPHVMGTDFGRLKALGRMESKPLRRGHKMIIGMRGSYGGVVMIGMLSSVVGLGLFNPLSVGAGLILGRMAYKEDKQNRLLRVRSEAKANVRRFVDDISFVVSKQSRDRLKMIQRLLRDHYREIAEEITRSLTESLQATIAAAQVAETERDNRIRELQRQLGILSQVNDNLAGLEPTLTPRASLGRA</sequence>
<evidence type="ECO:0000250" key="1"/>
<evidence type="ECO:0000255" key="2"/>
<evidence type="ECO:0000305" key="3"/>
<proteinExistence type="inferred from homology"/>
<reference key="1">
    <citation type="journal article" date="2002" name="J. Bacteriol.">
        <title>Whole-genome comparison of Mycobacterium tuberculosis clinical and laboratory strains.</title>
        <authorList>
            <person name="Fleischmann R.D."/>
            <person name="Alland D."/>
            <person name="Eisen J.A."/>
            <person name="Carpenter L."/>
            <person name="White O."/>
            <person name="Peterson J.D."/>
            <person name="DeBoy R.T."/>
            <person name="Dodson R.J."/>
            <person name="Gwinn M.L."/>
            <person name="Haft D.H."/>
            <person name="Hickey E.K."/>
            <person name="Kolonay J.F."/>
            <person name="Nelson W.C."/>
            <person name="Umayam L.A."/>
            <person name="Ermolaeva M.D."/>
            <person name="Salzberg S.L."/>
            <person name="Delcher A."/>
            <person name="Utterback T.R."/>
            <person name="Weidman J.F."/>
            <person name="Khouri H.M."/>
            <person name="Gill J."/>
            <person name="Mikula A."/>
            <person name="Bishai W."/>
            <person name="Jacobs W.R. Jr."/>
            <person name="Venter J.C."/>
            <person name="Fraser C.M."/>
        </authorList>
    </citation>
    <scope>NUCLEOTIDE SEQUENCE [LARGE SCALE GENOMIC DNA]</scope>
    <source>
        <strain>CDC 1551 / Oshkosh</strain>
    </source>
</reference>
<name>INIA_MYCTO</name>
<organism>
    <name type="scientific">Mycobacterium tuberculosis (strain CDC 1551 / Oshkosh)</name>
    <dbReference type="NCBI Taxonomy" id="83331"/>
    <lineage>
        <taxon>Bacteria</taxon>
        <taxon>Bacillati</taxon>
        <taxon>Actinomycetota</taxon>
        <taxon>Actinomycetes</taxon>
        <taxon>Mycobacteriales</taxon>
        <taxon>Mycobacteriaceae</taxon>
        <taxon>Mycobacterium</taxon>
        <taxon>Mycobacterium tuberculosis complex</taxon>
    </lineage>
</organism>
<keyword id="KW-0046">Antibiotic resistance</keyword>
<keyword id="KW-1003">Cell membrane</keyword>
<keyword id="KW-0175">Coiled coil</keyword>
<keyword id="KW-0472">Membrane</keyword>
<keyword id="KW-1185">Reference proteome</keyword>
<keyword id="KW-0812">Transmembrane</keyword>
<keyword id="KW-1133">Transmembrane helix</keyword>
<feature type="chain" id="PRO_0000427867" description="Isoniazid-induced protein IniA">
    <location>
        <begin position="1"/>
        <end position="640"/>
    </location>
</feature>
<feature type="transmembrane region" description="Helical" evidence="2">
    <location>
        <begin position="497"/>
        <end position="519"/>
    </location>
</feature>
<feature type="coiled-coil region" evidence="2">
    <location>
        <begin position="560"/>
        <end position="628"/>
    </location>
</feature>
<dbReference type="EMBL" id="AE000516">
    <property type="protein sequence ID" value="AAK44579.1"/>
    <property type="molecule type" value="Genomic_DNA"/>
</dbReference>
<dbReference type="PIR" id="G70573">
    <property type="entry name" value="G70573"/>
</dbReference>
<dbReference type="SMR" id="P9WJ98"/>
<dbReference type="KEGG" id="mtc:MT0357"/>
<dbReference type="PATRIC" id="fig|83331.31.peg.377"/>
<dbReference type="HOGENOM" id="CLU_019977_0_0_11"/>
<dbReference type="Proteomes" id="UP000001020">
    <property type="component" value="Chromosome"/>
</dbReference>
<dbReference type="GO" id="GO:0005886">
    <property type="term" value="C:plasma membrane"/>
    <property type="evidence" value="ECO:0007669"/>
    <property type="project" value="UniProtKB-SubCell"/>
</dbReference>
<dbReference type="GO" id="GO:0046677">
    <property type="term" value="P:response to antibiotic"/>
    <property type="evidence" value="ECO:0007669"/>
    <property type="project" value="UniProtKB-KW"/>
</dbReference>
<dbReference type="Gene3D" id="3.40.50.300">
    <property type="entry name" value="P-loop containing nucleotide triphosphate hydrolases"/>
    <property type="match status" value="1"/>
</dbReference>
<dbReference type="InterPro" id="IPR045063">
    <property type="entry name" value="Dynamin_N"/>
</dbReference>
<dbReference type="InterPro" id="IPR027417">
    <property type="entry name" value="P-loop_NTPase"/>
</dbReference>
<dbReference type="InterPro" id="IPR051943">
    <property type="entry name" value="TRAFAC_Dynamin-like_GTPase"/>
</dbReference>
<dbReference type="PANTHER" id="PTHR43681:SF1">
    <property type="entry name" value="SARCALUMENIN"/>
    <property type="match status" value="1"/>
</dbReference>
<dbReference type="PANTHER" id="PTHR43681">
    <property type="entry name" value="TRANSMEMBRANE GTPASE FZO"/>
    <property type="match status" value="1"/>
</dbReference>
<dbReference type="Pfam" id="PF00350">
    <property type="entry name" value="Dynamin_N"/>
    <property type="match status" value="1"/>
</dbReference>
<dbReference type="SUPFAM" id="SSF52540">
    <property type="entry name" value="P-loop containing nucleoside triphosphate hydrolases"/>
    <property type="match status" value="1"/>
</dbReference>
<gene>
    <name type="primary">iniA</name>
    <name type="ordered locus">MT0357</name>
</gene>